<evidence type="ECO:0000255" key="1">
    <source>
        <dbReference type="HAMAP-Rule" id="MF_00409"/>
    </source>
</evidence>
<keyword id="KW-0067">ATP-binding</keyword>
<keyword id="KW-0418">Kinase</keyword>
<keyword id="KW-0441">Lipid A biosynthesis</keyword>
<keyword id="KW-0444">Lipid biosynthesis</keyword>
<keyword id="KW-0443">Lipid metabolism</keyword>
<keyword id="KW-0547">Nucleotide-binding</keyword>
<keyword id="KW-0808">Transferase</keyword>
<proteinExistence type="inferred from homology"/>
<accession>Q6G4R6</accession>
<organism>
    <name type="scientific">Bartonella henselae (strain ATCC 49882 / DSM 28221 / CCUG 30454 / Houston 1)</name>
    <name type="common">Rochalimaea henselae</name>
    <dbReference type="NCBI Taxonomy" id="283166"/>
    <lineage>
        <taxon>Bacteria</taxon>
        <taxon>Pseudomonadati</taxon>
        <taxon>Pseudomonadota</taxon>
        <taxon>Alphaproteobacteria</taxon>
        <taxon>Hyphomicrobiales</taxon>
        <taxon>Bartonellaceae</taxon>
        <taxon>Bartonella</taxon>
    </lineage>
</organism>
<dbReference type="EC" id="2.7.1.130" evidence="1"/>
<dbReference type="EMBL" id="BX897699">
    <property type="protein sequence ID" value="CAF27079.1"/>
    <property type="molecule type" value="Genomic_DNA"/>
</dbReference>
<dbReference type="RefSeq" id="WP_011180217.1">
    <property type="nucleotide sequence ID" value="NZ_LRIJ02000001.1"/>
</dbReference>
<dbReference type="SMR" id="Q6G4R6"/>
<dbReference type="PaxDb" id="283166-BH02670"/>
<dbReference type="EnsemblBacteria" id="CAF27079">
    <property type="protein sequence ID" value="CAF27079"/>
    <property type="gene ID" value="BH02670"/>
</dbReference>
<dbReference type="GeneID" id="92984935"/>
<dbReference type="KEGG" id="bhe:BH02670"/>
<dbReference type="eggNOG" id="COG1663">
    <property type="taxonomic scope" value="Bacteria"/>
</dbReference>
<dbReference type="OrthoDB" id="9766423at2"/>
<dbReference type="UniPathway" id="UPA00359">
    <property type="reaction ID" value="UER00482"/>
</dbReference>
<dbReference type="Proteomes" id="UP000000421">
    <property type="component" value="Chromosome"/>
</dbReference>
<dbReference type="GO" id="GO:0005886">
    <property type="term" value="C:plasma membrane"/>
    <property type="evidence" value="ECO:0007669"/>
    <property type="project" value="TreeGrafter"/>
</dbReference>
<dbReference type="GO" id="GO:0005524">
    <property type="term" value="F:ATP binding"/>
    <property type="evidence" value="ECO:0007669"/>
    <property type="project" value="UniProtKB-UniRule"/>
</dbReference>
<dbReference type="GO" id="GO:0009029">
    <property type="term" value="F:tetraacyldisaccharide 4'-kinase activity"/>
    <property type="evidence" value="ECO:0007669"/>
    <property type="project" value="UniProtKB-UniRule"/>
</dbReference>
<dbReference type="GO" id="GO:0009245">
    <property type="term" value="P:lipid A biosynthetic process"/>
    <property type="evidence" value="ECO:0007669"/>
    <property type="project" value="UniProtKB-UniRule"/>
</dbReference>
<dbReference type="GO" id="GO:0009244">
    <property type="term" value="P:lipopolysaccharide core region biosynthetic process"/>
    <property type="evidence" value="ECO:0007669"/>
    <property type="project" value="TreeGrafter"/>
</dbReference>
<dbReference type="HAMAP" id="MF_00409">
    <property type="entry name" value="LpxK"/>
    <property type="match status" value="1"/>
</dbReference>
<dbReference type="InterPro" id="IPR003758">
    <property type="entry name" value="LpxK"/>
</dbReference>
<dbReference type="InterPro" id="IPR027417">
    <property type="entry name" value="P-loop_NTPase"/>
</dbReference>
<dbReference type="NCBIfam" id="TIGR00682">
    <property type="entry name" value="lpxK"/>
    <property type="match status" value="1"/>
</dbReference>
<dbReference type="PANTHER" id="PTHR42724">
    <property type="entry name" value="TETRAACYLDISACCHARIDE 4'-KINASE"/>
    <property type="match status" value="1"/>
</dbReference>
<dbReference type="PANTHER" id="PTHR42724:SF1">
    <property type="entry name" value="TETRAACYLDISACCHARIDE 4'-KINASE, MITOCHONDRIAL-RELATED"/>
    <property type="match status" value="1"/>
</dbReference>
<dbReference type="Pfam" id="PF02606">
    <property type="entry name" value="LpxK"/>
    <property type="match status" value="1"/>
</dbReference>
<dbReference type="SUPFAM" id="SSF52540">
    <property type="entry name" value="P-loop containing nucleoside triphosphate hydrolases"/>
    <property type="match status" value="1"/>
</dbReference>
<reference key="1">
    <citation type="journal article" date="2004" name="Proc. Natl. Acad. Sci. U.S.A.">
        <title>The louse-borne human pathogen Bartonella quintana is a genomic derivative of the zoonotic agent Bartonella henselae.</title>
        <authorList>
            <person name="Alsmark U.C.M."/>
            <person name="Frank A.C."/>
            <person name="Karlberg E.O."/>
            <person name="Legault B.-A."/>
            <person name="Ardell D.H."/>
            <person name="Canbaeck B."/>
            <person name="Eriksson A.-S."/>
            <person name="Naeslund A.K."/>
            <person name="Handley S.A."/>
            <person name="Huvet M."/>
            <person name="La Scola B."/>
            <person name="Holmberg M."/>
            <person name="Andersson S.G.E."/>
        </authorList>
    </citation>
    <scope>NUCLEOTIDE SEQUENCE [LARGE SCALE GENOMIC DNA]</scope>
    <source>
        <strain>ATCC 49882 / DSM 28221 / CCUG 30454 / Houston 1</strain>
    </source>
</reference>
<name>LPXK_BARHE</name>
<feature type="chain" id="PRO_0000190908" description="Tetraacyldisaccharide 4'-kinase">
    <location>
        <begin position="1"/>
        <end position="339"/>
    </location>
</feature>
<feature type="binding site" evidence="1">
    <location>
        <begin position="53"/>
        <end position="60"/>
    </location>
    <ligand>
        <name>ATP</name>
        <dbReference type="ChEBI" id="CHEBI:30616"/>
    </ligand>
</feature>
<protein>
    <recommendedName>
        <fullName evidence="1">Tetraacyldisaccharide 4'-kinase</fullName>
        <ecNumber evidence="1">2.7.1.130</ecNumber>
    </recommendedName>
    <alternativeName>
        <fullName evidence="1">Lipid A 4'-kinase</fullName>
    </alternativeName>
</protein>
<gene>
    <name evidence="1" type="primary">lpxK</name>
    <name type="ordered locus">BH02670</name>
</gene>
<sequence>MHLSAPHFWWKNKSFLRFLLAPISWGYAYFSRRRMARHPPIVDLPVLCIGNFTCGGAGKTPVVIAFAKVAKELGFVPGVVSRGYGGRVKGIHLVNEEHDNAYDVGDEALLLARHAFVAISVDRYAAAQRLKKEGCNLILMDDGFQSRRLYMDYALLVVDAMRGFGNGAVFPAGPLRVPLKTQFSLMDSVLLIGDSDACDYIAFLVNRTGKSLHHAHLESLASDKVAGKSFLAFAGIGNPDKFLKSIKELSGHVVQTYFYPDHYFFTNTDLKNLVQRAKMHNLWLATTAKDYIRIQTSKMQEDLKNLVVFDINVNFVQKNFCRVLLQEVMIRFRERKHSL</sequence>
<comment type="function">
    <text evidence="1">Transfers the gamma-phosphate of ATP to the 4'-position of a tetraacyldisaccharide 1-phosphate intermediate (termed DS-1-P) to form tetraacyldisaccharide 1,4'-bis-phosphate (lipid IVA).</text>
</comment>
<comment type="catalytic activity">
    <reaction evidence="1">
        <text>a lipid A disaccharide + ATP = a lipid IVA + ADP + H(+)</text>
        <dbReference type="Rhea" id="RHEA:67840"/>
        <dbReference type="ChEBI" id="CHEBI:15378"/>
        <dbReference type="ChEBI" id="CHEBI:30616"/>
        <dbReference type="ChEBI" id="CHEBI:176343"/>
        <dbReference type="ChEBI" id="CHEBI:176425"/>
        <dbReference type="ChEBI" id="CHEBI:456216"/>
        <dbReference type="EC" id="2.7.1.130"/>
    </reaction>
</comment>
<comment type="pathway">
    <text evidence="1">Glycolipid biosynthesis; lipid IV(A) biosynthesis; lipid IV(A) from (3R)-3-hydroxytetradecanoyl-[acyl-carrier-protein] and UDP-N-acetyl-alpha-D-glucosamine: step 6/6.</text>
</comment>
<comment type="similarity">
    <text evidence="1">Belongs to the LpxK family.</text>
</comment>